<sequence>MQNIPPQVQAMLGQLESYQQQLQLVIQQKQKVQADLNEAKKALEEIEALPDDAQVYKTVGTLIVKTTKEKALQELKEKVETLEVRLNALNRQEQKINEKVKELTQKIQAALRPPTAG</sequence>
<keyword id="KW-0143">Chaperone</keyword>
<keyword id="KW-0963">Cytoplasm</keyword>
<comment type="function">
    <text evidence="1">Molecular chaperone capable of stabilizing a range of proteins. Seems to fulfill an ATP-independent, HSP70-like function in archaeal de novo protein folding (By similarity).</text>
</comment>
<comment type="subunit">
    <text evidence="1">Heterohexamer of two alpha and four beta subunits.</text>
</comment>
<comment type="subcellular location">
    <subcellularLocation>
        <location evidence="1">Cytoplasm</location>
    </subcellularLocation>
</comment>
<comment type="similarity">
    <text evidence="2">Belongs to the prefoldin subunit beta family.</text>
</comment>
<protein>
    <recommendedName>
        <fullName>Prefoldin subunit beta</fullName>
    </recommendedName>
    <alternativeName>
        <fullName>GimC subunit beta</fullName>
    </alternativeName>
</protein>
<gene>
    <name type="primary">pfdB</name>
    <name type="ordered locus">PYRAB15130</name>
    <name type="ORF">PAB1364</name>
</gene>
<evidence type="ECO:0000250" key="1"/>
<evidence type="ECO:0000305" key="2"/>
<accession>Q9UYJ4</accession>
<accession>G8ZIT4</accession>
<name>PFDB_PYRAB</name>
<proteinExistence type="inferred from homology"/>
<feature type="chain" id="PRO_0000124864" description="Prefoldin subunit beta">
    <location>
        <begin position="1"/>
        <end position="117"/>
    </location>
</feature>
<reference key="1">
    <citation type="journal article" date="2003" name="Mol. Microbiol.">
        <title>An integrated analysis of the genome of the hyperthermophilic archaeon Pyrococcus abyssi.</title>
        <authorList>
            <person name="Cohen G.N."/>
            <person name="Barbe V."/>
            <person name="Flament D."/>
            <person name="Galperin M."/>
            <person name="Heilig R."/>
            <person name="Lecompte O."/>
            <person name="Poch O."/>
            <person name="Prieur D."/>
            <person name="Querellou J."/>
            <person name="Ripp R."/>
            <person name="Thierry J.-C."/>
            <person name="Van der Oost J."/>
            <person name="Weissenbach J."/>
            <person name="Zivanovic Y."/>
            <person name="Forterre P."/>
        </authorList>
    </citation>
    <scope>NUCLEOTIDE SEQUENCE [LARGE SCALE GENOMIC DNA]</scope>
    <source>
        <strain>GE5 / Orsay</strain>
    </source>
</reference>
<reference key="2">
    <citation type="journal article" date="2012" name="Curr. Microbiol.">
        <title>Re-annotation of two hyperthermophilic archaea Pyrococcus abyssi GE5 and Pyrococcus furiosus DSM 3638.</title>
        <authorList>
            <person name="Gao J."/>
            <person name="Wang J."/>
        </authorList>
    </citation>
    <scope>GENOME REANNOTATION</scope>
    <source>
        <strain>GE5 / Orsay</strain>
    </source>
</reference>
<dbReference type="EMBL" id="AJ248287">
    <property type="protein sequence ID" value="CAB50418.1"/>
    <property type="molecule type" value="Genomic_DNA"/>
</dbReference>
<dbReference type="EMBL" id="HE613800">
    <property type="protein sequence ID" value="CCE70967.1"/>
    <property type="molecule type" value="Genomic_DNA"/>
</dbReference>
<dbReference type="PIR" id="E75065">
    <property type="entry name" value="E75065"/>
</dbReference>
<dbReference type="RefSeq" id="WP_010868631.1">
    <property type="nucleotide sequence ID" value="NC_000868.1"/>
</dbReference>
<dbReference type="SMR" id="Q9UYJ4"/>
<dbReference type="STRING" id="272844.PAB1364"/>
<dbReference type="KEGG" id="pab:PAB1364"/>
<dbReference type="PATRIC" id="fig|272844.11.peg.1612"/>
<dbReference type="eggNOG" id="arCOG01342">
    <property type="taxonomic scope" value="Archaea"/>
</dbReference>
<dbReference type="HOGENOM" id="CLU_131909_1_1_2"/>
<dbReference type="OrthoDB" id="86066at2157"/>
<dbReference type="PhylomeDB" id="Q9UYJ4"/>
<dbReference type="Proteomes" id="UP000000810">
    <property type="component" value="Chromosome"/>
</dbReference>
<dbReference type="Proteomes" id="UP000009139">
    <property type="component" value="Chromosome"/>
</dbReference>
<dbReference type="GO" id="GO:0005737">
    <property type="term" value="C:cytoplasm"/>
    <property type="evidence" value="ECO:0007669"/>
    <property type="project" value="UniProtKB-SubCell"/>
</dbReference>
<dbReference type="GO" id="GO:0016272">
    <property type="term" value="C:prefoldin complex"/>
    <property type="evidence" value="ECO:0007669"/>
    <property type="project" value="UniProtKB-UniRule"/>
</dbReference>
<dbReference type="GO" id="GO:0044183">
    <property type="term" value="F:protein folding chaperone"/>
    <property type="evidence" value="ECO:0007669"/>
    <property type="project" value="TreeGrafter"/>
</dbReference>
<dbReference type="GO" id="GO:0051082">
    <property type="term" value="F:unfolded protein binding"/>
    <property type="evidence" value="ECO:0007669"/>
    <property type="project" value="UniProtKB-UniRule"/>
</dbReference>
<dbReference type="CDD" id="cd23162">
    <property type="entry name" value="Prefoldin_beta_GimC"/>
    <property type="match status" value="1"/>
</dbReference>
<dbReference type="Gene3D" id="1.10.287.370">
    <property type="match status" value="1"/>
</dbReference>
<dbReference type="HAMAP" id="MF_00307">
    <property type="entry name" value="PfdB"/>
    <property type="match status" value="1"/>
</dbReference>
<dbReference type="InterPro" id="IPR002777">
    <property type="entry name" value="PFD_beta-like"/>
</dbReference>
<dbReference type="InterPro" id="IPR012713">
    <property type="entry name" value="PfdB"/>
</dbReference>
<dbReference type="InterPro" id="IPR009053">
    <property type="entry name" value="Prefoldin"/>
</dbReference>
<dbReference type="NCBIfam" id="TIGR02338">
    <property type="entry name" value="gimC_beta"/>
    <property type="match status" value="1"/>
</dbReference>
<dbReference type="PANTHER" id="PTHR20903:SF0">
    <property type="entry name" value="PREFOLDIN SUBUNIT 1"/>
    <property type="match status" value="1"/>
</dbReference>
<dbReference type="PANTHER" id="PTHR20903">
    <property type="entry name" value="PREFOLDIN SUBUNIT 1-RELATED"/>
    <property type="match status" value="1"/>
</dbReference>
<dbReference type="Pfam" id="PF01920">
    <property type="entry name" value="Prefoldin_2"/>
    <property type="match status" value="1"/>
</dbReference>
<dbReference type="SUPFAM" id="SSF46579">
    <property type="entry name" value="Prefoldin"/>
    <property type="match status" value="1"/>
</dbReference>
<organism>
    <name type="scientific">Pyrococcus abyssi (strain GE5 / Orsay)</name>
    <dbReference type="NCBI Taxonomy" id="272844"/>
    <lineage>
        <taxon>Archaea</taxon>
        <taxon>Methanobacteriati</taxon>
        <taxon>Methanobacteriota</taxon>
        <taxon>Thermococci</taxon>
        <taxon>Thermococcales</taxon>
        <taxon>Thermococcaceae</taxon>
        <taxon>Pyrococcus</taxon>
    </lineage>
</organism>